<sequence>MERIKELRNLMSQSRTREILTKTTVDHMAIIKKYTSGRQEKNPSLRMKWMMAMKYPITADKRITEMVPERNEQGQTLWSKMXDAGSDRVMVSPLAVTWWNRNGPVTSTVHYPKVYKTYFDKVERLKHGTFGPVHFRNQVKIRRRVDINPGHADLSAKEAQDVIMEVVFPNEVGARILTSESQLTITKEKKEELQDCKISPLMVAYMLERELVRKTRFLPVAGGTSSVYIEVLHLTQGTCWEQMYTPGGEVRNDDIDQSLIIAARNIVRRAAVSADPLASLLEMCHSTQIGGTRMVDILRQNPTEEQAVDICKAAMGLRISSSFSFGGFTFKRTSGSSIKREEEVLTGNLQTLKIRVHEGYEEFTMVGKRATAILRKATRRLVQLIVSGRDEQSIAEAIIVAMVFSQEDCMIKAVRGDLNFVNRANQRLNPMHQLLRHFQKDAKVLFQNWGIEHIDNVMGMVGVLPDMTPSTEMSMRGIRVSKMGVDEYSSTERVVVSIDRFLRVRDQRGNVLLSPEEVSETHGTERLTITYSSSMMWEINGPESVLVNTYQWIIRNWETVKIQWSQNPTMLYNKMEFEPFQSLVPKAIRGQYSGFVRTLFQQMRDVLGTFDTTQIIKLLPFAAAPPKQSRMQFSSLTVNVRGSGMRILVRGNSPVFNYNKTTKRLTILGKDAGTLIEDPDESTSGVESAVLRGFLILGKEDRRYGPALSINELSNLAKGEKANVLIGQGDVVLVMKRKRDSSILTDSQTATKRIRMAIN</sequence>
<organismHost>
    <name type="scientific">Aves</name>
    <dbReference type="NCBI Taxonomy" id="8782"/>
</organismHost>
<organismHost>
    <name type="scientific">Cetacea</name>
    <name type="common">whales</name>
    <dbReference type="NCBI Taxonomy" id="9721"/>
</organismHost>
<organismHost>
    <name type="scientific">Homo sapiens</name>
    <name type="common">Human</name>
    <dbReference type="NCBI Taxonomy" id="9606"/>
</organismHost>
<organismHost>
    <name type="scientific">Phocidae</name>
    <name type="common">true seals</name>
    <dbReference type="NCBI Taxonomy" id="9709"/>
</organismHost>
<organismHost>
    <name type="scientific">Sus scrofa</name>
    <name type="common">Pig</name>
    <dbReference type="NCBI Taxonomy" id="9823"/>
</organismHost>
<reference key="1">
    <citation type="submission" date="2005-11" db="EMBL/GenBank/DDBJ databases">
        <title>The NIAID influenza genome sequencing project.</title>
        <authorList>
            <person name="Ghedin E."/>
            <person name="Spiro D."/>
            <person name="Miller N."/>
            <person name="Zaborsky J."/>
            <person name="Feldblyum T."/>
            <person name="Subbu V."/>
            <person name="Shumway M."/>
            <person name="Sparenborg J."/>
            <person name="Groveman L."/>
            <person name="Halpin R."/>
            <person name="Sitz J."/>
            <person name="Koo H."/>
            <person name="Salzberg S.L."/>
            <person name="Webster R.G."/>
            <person name="Hoffmann E."/>
            <person name="Krauss S."/>
            <person name="Naeve C."/>
            <person name="Bao Y."/>
            <person name="Bolotov P."/>
            <person name="Dernovoy D."/>
            <person name="Kiryutin B."/>
            <person name="Lipman D.J."/>
            <person name="Tatusova T."/>
        </authorList>
    </citation>
    <scope>NUCLEOTIDE SEQUENCE [GENOMIC RNA]</scope>
</reference>
<accession>Q30NP1</accession>
<comment type="function">
    <text evidence="1">Plays an essential role in transcription initiation and cap-stealing mechanism, in which cellular capped pre-mRNAs are used to generate primers for viral transcription. Recognizes and binds the 7-methylguanosine-containing cap of the target pre-RNA which is subsequently cleaved after 10-13 nucleotides by the viral protein PA. Plays a role in the initiation of the viral genome replication and modulates the activity of the ribonucleoprotein (RNP) complex. In addition, participates in the inhibition of type I interferon induction through interaction with and inhibition of the host mitochondrial antiviral signaling protein MAVS.</text>
</comment>
<comment type="subunit">
    <text evidence="1">Influenza RNA polymerase is composed of three subunits: PB1, PB2 and PA. Interacts (via N-terminus) with PB1 (via C-terminus). Interacts with nucleoprotein NP (via N-terminus). Interacts (via N-terminus) with host MAVS (via N-terminus); this interaction inhibits host innate immune response.</text>
</comment>
<comment type="subcellular location">
    <subcellularLocation>
        <location evidence="1">Virion</location>
    </subcellularLocation>
    <subcellularLocation>
        <location evidence="1">Host nucleus</location>
    </subcellularLocation>
    <subcellularLocation>
        <location evidence="1">Host mitochondrion</location>
    </subcellularLocation>
</comment>
<comment type="similarity">
    <text evidence="1">Belongs to the influenza viruses PB2 family.</text>
</comment>
<dbReference type="EMBL" id="CY006051">
    <property type="protein sequence ID" value="ABB46402.1"/>
    <property type="molecule type" value="Genomic_RNA"/>
</dbReference>
<dbReference type="PDB" id="4YD0">
    <property type="method" value="X-ray"/>
    <property type="resolution" value="2.62 A"/>
    <property type="chains" value="A=318-483"/>
</dbReference>
<dbReference type="PDB" id="5BUH">
    <property type="method" value="X-ray"/>
    <property type="resolution" value="2.55 A"/>
    <property type="chains" value="A=318-483"/>
</dbReference>
<dbReference type="PDB" id="5F79">
    <property type="method" value="X-ray"/>
    <property type="resolution" value="2.40 A"/>
    <property type="chains" value="A=318-483"/>
</dbReference>
<dbReference type="PDB" id="5JUN">
    <property type="method" value="X-ray"/>
    <property type="resolution" value="2.69 A"/>
    <property type="chains" value="A=318-483"/>
</dbReference>
<dbReference type="PDB" id="5JUR">
    <property type="method" value="X-ray"/>
    <property type="resolution" value="2.93 A"/>
    <property type="chains" value="A=318-483"/>
</dbReference>
<dbReference type="PDBsum" id="4YD0"/>
<dbReference type="PDBsum" id="5BUH"/>
<dbReference type="PDBsum" id="5F79"/>
<dbReference type="PDBsum" id="5JUN"/>
<dbReference type="PDBsum" id="5JUR"/>
<dbReference type="SMR" id="Q30NP1"/>
<dbReference type="EvolutionaryTrace" id="Q30NP1"/>
<dbReference type="PRO" id="PR:Q30NP1"/>
<dbReference type="Proteomes" id="UP000000827">
    <property type="component" value="Genome"/>
</dbReference>
<dbReference type="GO" id="GO:0033650">
    <property type="term" value="C:host cell mitochondrion"/>
    <property type="evidence" value="ECO:0007669"/>
    <property type="project" value="UniProtKB-SubCell"/>
</dbReference>
<dbReference type="GO" id="GO:0042025">
    <property type="term" value="C:host cell nucleus"/>
    <property type="evidence" value="ECO:0007669"/>
    <property type="project" value="UniProtKB-SubCell"/>
</dbReference>
<dbReference type="GO" id="GO:0044423">
    <property type="term" value="C:virion component"/>
    <property type="evidence" value="ECO:0007669"/>
    <property type="project" value="UniProtKB-UniRule"/>
</dbReference>
<dbReference type="GO" id="GO:0003723">
    <property type="term" value="F:RNA binding"/>
    <property type="evidence" value="ECO:0007669"/>
    <property type="project" value="UniProtKB-UniRule"/>
</dbReference>
<dbReference type="GO" id="GO:0003968">
    <property type="term" value="F:RNA-directed RNA polymerase activity"/>
    <property type="evidence" value="ECO:0007669"/>
    <property type="project" value="UniProtKB-UniRule"/>
</dbReference>
<dbReference type="GO" id="GO:0006370">
    <property type="term" value="P:7-methylguanosine mRNA capping"/>
    <property type="evidence" value="ECO:0007669"/>
    <property type="project" value="UniProtKB-UniRule"/>
</dbReference>
<dbReference type="GO" id="GO:0075526">
    <property type="term" value="P:cap snatching"/>
    <property type="evidence" value="ECO:0007669"/>
    <property type="project" value="UniProtKB-UniRule"/>
</dbReference>
<dbReference type="GO" id="GO:0006351">
    <property type="term" value="P:DNA-templated transcription"/>
    <property type="evidence" value="ECO:0007669"/>
    <property type="project" value="UniProtKB-UniRule"/>
</dbReference>
<dbReference type="GO" id="GO:0039545">
    <property type="term" value="P:symbiont-mediated suppression of host cytoplasmic pattern recognition receptor signaling pathway via inhibition of MAVS activity"/>
    <property type="evidence" value="ECO:0007669"/>
    <property type="project" value="UniProtKB-UniRule"/>
</dbReference>
<dbReference type="GO" id="GO:0039657">
    <property type="term" value="P:symbiont-mediated suppression of host gene expression"/>
    <property type="evidence" value="ECO:0007669"/>
    <property type="project" value="UniProtKB-KW"/>
</dbReference>
<dbReference type="GO" id="GO:0039523">
    <property type="term" value="P:symbiont-mediated suppression of host mRNA transcription via inhibition of RNA polymerase II activity"/>
    <property type="evidence" value="ECO:0007669"/>
    <property type="project" value="UniProtKB-UniRule"/>
</dbReference>
<dbReference type="GO" id="GO:0039694">
    <property type="term" value="P:viral RNA genome replication"/>
    <property type="evidence" value="ECO:0007669"/>
    <property type="project" value="InterPro"/>
</dbReference>
<dbReference type="FunFam" id="3.30.30.90:FF:000001">
    <property type="entry name" value="Polymerase basic protein 2"/>
    <property type="match status" value="1"/>
</dbReference>
<dbReference type="Gene3D" id="3.30.30.90">
    <property type="entry name" value="Polymerase Basic Protein 2, C-terminal domain"/>
    <property type="match status" value="1"/>
</dbReference>
<dbReference type="HAMAP" id="MF_04062">
    <property type="entry name" value="INV_PB2"/>
    <property type="match status" value="1"/>
</dbReference>
<dbReference type="InterPro" id="IPR049110">
    <property type="entry name" value="Flu_PB2_2nd"/>
</dbReference>
<dbReference type="InterPro" id="IPR049114">
    <property type="entry name" value="Flu_PB2_6th"/>
</dbReference>
<dbReference type="InterPro" id="IPR049115">
    <property type="entry name" value="Flu_PB2_C"/>
</dbReference>
<dbReference type="InterPro" id="IPR048298">
    <property type="entry name" value="Flu_PB2_CAP-bd"/>
</dbReference>
<dbReference type="InterPro" id="IPR049111">
    <property type="entry name" value="Flu_PB2_middle"/>
</dbReference>
<dbReference type="InterPro" id="IPR049106">
    <property type="entry name" value="Flu_PB2_N"/>
</dbReference>
<dbReference type="InterPro" id="IPR001591">
    <property type="entry name" value="INV_PB2"/>
</dbReference>
<dbReference type="InterPro" id="IPR049113">
    <property type="entry name" value="PB2_helical"/>
</dbReference>
<dbReference type="InterPro" id="IPR037258">
    <property type="entry name" value="PDB2_C"/>
</dbReference>
<dbReference type="Pfam" id="PF20947">
    <property type="entry name" value="Flu_PB2_1st"/>
    <property type="match status" value="1"/>
</dbReference>
<dbReference type="Pfam" id="PF20948">
    <property type="entry name" value="Flu_PB2_2nd"/>
    <property type="match status" value="1"/>
</dbReference>
<dbReference type="Pfam" id="PF20949">
    <property type="entry name" value="Flu_PB2_3rd"/>
    <property type="match status" value="1"/>
</dbReference>
<dbReference type="Pfam" id="PF20950">
    <property type="entry name" value="Flu_PB2_4th"/>
    <property type="match status" value="1"/>
</dbReference>
<dbReference type="Pfam" id="PF00604">
    <property type="entry name" value="Flu_PB2_5th"/>
    <property type="match status" value="1"/>
</dbReference>
<dbReference type="Pfam" id="PF20951">
    <property type="entry name" value="Flu_PB2_6th"/>
    <property type="match status" value="1"/>
</dbReference>
<dbReference type="Pfam" id="PF20952">
    <property type="entry name" value="Flu_PB2_7th"/>
    <property type="match status" value="1"/>
</dbReference>
<dbReference type="SUPFAM" id="SSF160453">
    <property type="entry name" value="PB2 C-terminal domain-like"/>
    <property type="match status" value="1"/>
</dbReference>
<proteinExistence type="evidence at protein level"/>
<name>PB2_I75A0</name>
<gene>
    <name evidence="1" type="primary">PB2</name>
</gene>
<protein>
    <recommendedName>
        <fullName evidence="1">Polymerase basic protein 2</fullName>
    </recommendedName>
    <alternativeName>
        <fullName evidence="1">RNA-directed RNA polymerase subunit P3</fullName>
    </alternativeName>
</protein>
<evidence type="ECO:0000255" key="1">
    <source>
        <dbReference type="HAMAP-Rule" id="MF_04062"/>
    </source>
</evidence>
<evidence type="ECO:0007829" key="2">
    <source>
        <dbReference type="PDB" id="4YD0"/>
    </source>
</evidence>
<evidence type="ECO:0007829" key="3">
    <source>
        <dbReference type="PDB" id="5F79"/>
    </source>
</evidence>
<organism>
    <name type="scientific">Influenza A virus (strain A/Beijing/39/1975 H3N2)</name>
    <dbReference type="NCBI Taxonomy" id="383596"/>
    <lineage>
        <taxon>Viruses</taxon>
        <taxon>Riboviria</taxon>
        <taxon>Orthornavirae</taxon>
        <taxon>Negarnaviricota</taxon>
        <taxon>Polyploviricotina</taxon>
        <taxon>Insthoviricetes</taxon>
        <taxon>Articulavirales</taxon>
        <taxon>Orthomyxoviridae</taxon>
        <taxon>Alphainfluenzavirus</taxon>
        <taxon>Alphainfluenzavirus influenzae</taxon>
        <taxon>Influenza A virus</taxon>
    </lineage>
</organism>
<keyword id="KW-0002">3D-structure</keyword>
<keyword id="KW-1157">Cap snatching</keyword>
<keyword id="KW-1262">Eukaryotic host gene expression shutoff by virus</keyword>
<keyword id="KW-1191">Eukaryotic host transcription shutoff by virus</keyword>
<keyword id="KW-1190">Host gene expression shutoff by virus</keyword>
<keyword id="KW-1045">Host mitochondrion</keyword>
<keyword id="KW-1048">Host nucleus</keyword>
<keyword id="KW-0945">Host-virus interaction</keyword>
<keyword id="KW-1090">Inhibition of host innate immune response by virus</keyword>
<keyword id="KW-1097">Inhibition of host MAVS by virus</keyword>
<keyword id="KW-1113">Inhibition of host RLR pathway by virus</keyword>
<keyword id="KW-1104">Inhibition of host RNA polymerase II by virus</keyword>
<keyword id="KW-0506">mRNA capping</keyword>
<keyword id="KW-0507">mRNA processing</keyword>
<keyword id="KW-0899">Viral immunoevasion</keyword>
<keyword id="KW-1195">Viral transcription</keyword>
<keyword id="KW-0946">Virion</keyword>
<feature type="chain" id="PRO_0000279621" description="Polymerase basic protein 2">
    <location>
        <begin position="1"/>
        <end position="759"/>
    </location>
</feature>
<feature type="short sequence motif" description="Nuclear localization signal" evidence="1">
    <location>
        <begin position="736"/>
        <end position="739"/>
    </location>
</feature>
<feature type="site" description="Mammalian adaptation" evidence="1">
    <location>
        <position position="627"/>
    </location>
</feature>
<feature type="strand" evidence="3">
    <location>
        <begin position="322"/>
        <end position="325"/>
    </location>
</feature>
<feature type="strand" evidence="3">
    <location>
        <begin position="328"/>
        <end position="335"/>
    </location>
</feature>
<feature type="strand" evidence="3">
    <location>
        <begin position="338"/>
        <end position="345"/>
    </location>
</feature>
<feature type="strand" evidence="3">
    <location>
        <begin position="351"/>
        <end position="359"/>
    </location>
</feature>
<feature type="strand" evidence="3">
    <location>
        <begin position="361"/>
        <end position="366"/>
    </location>
</feature>
<feature type="strand" evidence="3">
    <location>
        <begin position="368"/>
        <end position="377"/>
    </location>
</feature>
<feature type="strand" evidence="3">
    <location>
        <begin position="380"/>
        <end position="390"/>
    </location>
</feature>
<feature type="helix" evidence="3">
    <location>
        <begin position="391"/>
        <end position="404"/>
    </location>
</feature>
<feature type="helix" evidence="3">
    <location>
        <begin position="408"/>
        <end position="412"/>
    </location>
</feature>
<feature type="strand" evidence="2">
    <location>
        <begin position="416"/>
        <end position="418"/>
    </location>
</feature>
<feature type="helix" evidence="3">
    <location>
        <begin position="430"/>
        <end position="440"/>
    </location>
</feature>
<feature type="helix" evidence="3">
    <location>
        <begin position="443"/>
        <end position="449"/>
    </location>
</feature>
<feature type="strand" evidence="3">
    <location>
        <begin position="451"/>
        <end position="453"/>
    </location>
</feature>
<feature type="strand" evidence="3">
    <location>
        <begin position="460"/>
        <end position="463"/>
    </location>
</feature>
<feature type="strand" evidence="3">
    <location>
        <begin position="469"/>
        <end position="475"/>
    </location>
</feature>
<feature type="strand" evidence="3">
    <location>
        <begin position="478"/>
        <end position="481"/>
    </location>
</feature>